<feature type="chain" id="PRO_0000403633" description="RNA-directed RNA polymerase">
    <location>
        <begin position="1"/>
        <end position="1255"/>
    </location>
</feature>
<feature type="domain" description="RdRp catalytic" evidence="1">
    <location>
        <begin position="548"/>
        <end position="756"/>
    </location>
</feature>
<organismHost>
    <name type="scientific">Oryza latifolia</name>
    <dbReference type="NCBI Taxonomy" id="4534"/>
</organismHost>
<organismHost>
    <name type="scientific">Oryza nivara</name>
    <name type="common">Indian wild rice</name>
    <name type="synonym">Oryza sativa f. spontanea</name>
    <dbReference type="NCBI Taxonomy" id="4536"/>
</organismHost>
<organismHost>
    <name type="scientific">Oryza rufipogon</name>
    <name type="common">Brownbeard rice</name>
    <name type="synonym">Asian wild rice</name>
    <dbReference type="NCBI Taxonomy" id="4529"/>
</organismHost>
<protein>
    <recommendedName>
        <fullName>RNA-directed RNA polymerase</fullName>
        <ecNumber>2.7.7.48</ecNumber>
    </recommendedName>
</protein>
<sequence>MTLLVITEQTIHSLCLDHGETNQIIAEIKQLEKPELLFSYITDAEPLATGEVFVGPDICGNCITHTFRVPDYVAKPPPYDSKRVYYPYSYTCLGFDSHPYDYLLTLDTKSIFQAIRKITLTRKLSIATQSDLDLIILKKLTTQSNCQSRVSSIWRQCVAACLAFEPQIQNNNSTQSPNLNNLVKRMFATLLKPIGRLPFYERRRNFVWEEEVSCPTILPLLLYSIQNLVTQFCAGVINRMEMILAFQYYLDCGVTAYQDEKLRLQKLIRNWLREGLAKFSKIAMPNWTVSGVISCTTVKPIMITTHEAREIKSAREAREASVPTYLLQYINHAIHKAISPYQTHQYWQATRVFANDGTYFASVAALTLNKAVRPRIEETTVKYPNSRYLTMNKEHIAVSLPNETDTNFGLACQFVKQFIPRLVTRLKNTNFQEEFIAFLTSSSSGKDFEDAAIATMTRTIQRVAKKRIVAAGLESRSYLNQQFIADECLAAAKLVGRTQIGRRQRAIAGVNNTRSLLGFPPMLMLKALLDMTGTTSSGKQMGNYLDLLIPLGLSPYANVIFNSADVDAMDASVQASVQQIMWHFVVYIALQLERTDYFAFTSGDEVIYELVEGKDSVATSIHMSGLARSCLRAMHLLQPQNCVLNDDIVGELVTREPTFPSGQPFTTVHHTFTLSNAIMGGTLRVTNLTNQPSTLLNLTVQGDDTRTINYGPKGCIEKCIDDQSSFVSDWGFKVSNETSSHTSEYLQQRVSCGTFVGYPDRVSLFAAERPKEGKTMKEKMSEIWSLVTDLGCRSRDPQRLVRLMYAIGVACCCRLTIRTERLVAEEFIASEVGRACCAEILVPKVAARADRGVMLRYHYPISALWLEEGGQLPPLATKRRDGTWTCFPSYYFQRGDSNRYWYWDVSLTEEKWITTVEMRSDWDSNNAIELIDDEILEAYATRYALAALGLNKTRQMERLRLSEESTIFDVEQLASGLNAYRNLSKIAISHRASERLKNAGVELPDSVLYSRHTQSRIQDAILKAQMTEKEEIEMSLYFFKDKGYLRSLRELVKSKSGDLAMIHRCEWGERVTILESSIFNVVSTTPLSMEVYPGSIMSFILCYTGLKGAHSGQLAGLVGLLQGKYGGGKISELQFSIAKKIYLTKPYLLNEFIIACGLGGEAELALKNALHAFEMLRGVEFSTVHTPRQFFFGVDSGVTLGNHLDYPNGFPGTRIELAAHLLLAMNFLSSNAQSCTGRSIRVRVPRGMWSRCTNF</sequence>
<organism>
    <name type="scientific">Rice ragged stunt virus (isolate Thailand)</name>
    <name type="common">RRSV</name>
    <dbReference type="NCBI Taxonomy" id="649603"/>
    <lineage>
        <taxon>Viruses</taxon>
        <taxon>Riboviria</taxon>
        <taxon>Orthornavirae</taxon>
        <taxon>Duplornaviricota</taxon>
        <taxon>Resentoviricetes</taxon>
        <taxon>Reovirales</taxon>
        <taxon>Spinareoviridae</taxon>
        <taxon>Oryzavirus</taxon>
        <taxon>Rice ragged stunt virus</taxon>
    </lineage>
</organism>
<comment type="function">
    <text evidence="1">RNA-directed RNA polymerase that is involved in transcription and genome replication. Following infection, it catalyzes the synthesis of fully conservative plus strands. After core assembly, which consists in recruitment of one capped plus-strand for each genomic segments and polymerase complexes, the polymerase switches mode and catalyzes the synthesis of complementary minus-strands (By similarity).</text>
</comment>
<comment type="catalytic activity">
    <reaction evidence="1">
        <text>RNA(n) + a ribonucleoside 5'-triphosphate = RNA(n+1) + diphosphate</text>
        <dbReference type="Rhea" id="RHEA:21248"/>
        <dbReference type="Rhea" id="RHEA-COMP:14527"/>
        <dbReference type="Rhea" id="RHEA-COMP:17342"/>
        <dbReference type="ChEBI" id="CHEBI:33019"/>
        <dbReference type="ChEBI" id="CHEBI:61557"/>
        <dbReference type="ChEBI" id="CHEBI:140395"/>
        <dbReference type="EC" id="2.7.7.48"/>
    </reaction>
</comment>
<comment type="subcellular location">
    <subcellularLocation>
        <location evidence="2">Virion</location>
    </subcellularLocation>
</comment>
<accession>O92604</accession>
<evidence type="ECO:0000255" key="1">
    <source>
        <dbReference type="PROSITE-ProRule" id="PRU00539"/>
    </source>
</evidence>
<evidence type="ECO:0000305" key="2"/>
<keyword id="KW-0378">Hydrolase</keyword>
<keyword id="KW-0548">Nucleotidyltransferase</keyword>
<keyword id="KW-1185">Reference proteome</keyword>
<keyword id="KW-0696">RNA-directed RNA polymerase</keyword>
<keyword id="KW-0808">Transferase</keyword>
<keyword id="KW-0693">Viral RNA replication</keyword>
<keyword id="KW-0946">Virion</keyword>
<dbReference type="EC" id="2.7.7.48"/>
<dbReference type="EMBL" id="U66714">
    <property type="protein sequence ID" value="AAC36456.1"/>
    <property type="molecule type" value="Genomic_RNA"/>
</dbReference>
<dbReference type="RefSeq" id="NP_620541.1">
    <property type="nucleotide sequence ID" value="NC_003771.1"/>
</dbReference>
<dbReference type="SMR" id="O92604"/>
<dbReference type="GeneID" id="991204"/>
<dbReference type="KEGG" id="vg:991204"/>
<dbReference type="Proteomes" id="UP000000348">
    <property type="component" value="Genome"/>
</dbReference>
<dbReference type="GO" id="GO:0044423">
    <property type="term" value="C:virion component"/>
    <property type="evidence" value="ECO:0007669"/>
    <property type="project" value="UniProtKB-KW"/>
</dbReference>
<dbReference type="GO" id="GO:0016787">
    <property type="term" value="F:hydrolase activity"/>
    <property type="evidence" value="ECO:0007669"/>
    <property type="project" value="UniProtKB-KW"/>
</dbReference>
<dbReference type="GO" id="GO:0003723">
    <property type="term" value="F:RNA binding"/>
    <property type="evidence" value="ECO:0007669"/>
    <property type="project" value="InterPro"/>
</dbReference>
<dbReference type="GO" id="GO:0003968">
    <property type="term" value="F:RNA-directed RNA polymerase activity"/>
    <property type="evidence" value="ECO:0007669"/>
    <property type="project" value="UniProtKB-KW"/>
</dbReference>
<dbReference type="GO" id="GO:0019079">
    <property type="term" value="P:viral genome replication"/>
    <property type="evidence" value="ECO:0007669"/>
    <property type="project" value="InterPro"/>
</dbReference>
<dbReference type="Gene3D" id="3.90.1850.10">
    <property type="entry name" value="RNA-directed RNA polymerase lambda-3"/>
    <property type="match status" value="1"/>
</dbReference>
<dbReference type="InterPro" id="IPR043502">
    <property type="entry name" value="DNA/RNA_pol_sf"/>
</dbReference>
<dbReference type="InterPro" id="IPR054002">
    <property type="entry name" value="RdRP_C"/>
</dbReference>
<dbReference type="InterPro" id="IPR054006">
    <property type="entry name" value="RdRP_N"/>
</dbReference>
<dbReference type="InterPro" id="IPR007097">
    <property type="entry name" value="RNA-dir_pol_reovirus"/>
</dbReference>
<dbReference type="Pfam" id="PF22213">
    <property type="entry name" value="CPV_RdRP_C"/>
    <property type="match status" value="1"/>
</dbReference>
<dbReference type="Pfam" id="PF22209">
    <property type="entry name" value="CPV_RdRP_N"/>
    <property type="match status" value="1"/>
</dbReference>
<dbReference type="Pfam" id="PF22212">
    <property type="entry name" value="CPV_RdRP_pol_dom"/>
    <property type="match status" value="1"/>
</dbReference>
<dbReference type="SUPFAM" id="SSF56672">
    <property type="entry name" value="DNA/RNA polymerases"/>
    <property type="match status" value="1"/>
</dbReference>
<dbReference type="PROSITE" id="PS50523">
    <property type="entry name" value="RDRP_DSRNA_REO"/>
    <property type="match status" value="1"/>
</dbReference>
<reference key="1">
    <citation type="journal article" date="1998" name="Arch. Virol.">
        <title>Rice ragged stunt oryzavirus genome segment S4 could encode an RNA dependent RNA polymerase and a second protein of unknown function.</title>
        <authorList>
            <person name="Upadhyaya N.M."/>
            <person name="Ramm K."/>
            <person name="Gellatly J.A."/>
            <person name="Li Z."/>
            <person name="Kositratana W."/>
            <person name="Waterhouse P.M."/>
        </authorList>
    </citation>
    <scope>NUCLEOTIDE SEQUENCE [GENOMIC RNA]</scope>
</reference>
<name>RDRP_RRSVT</name>
<proteinExistence type="inferred from homology"/>